<gene>
    <name evidence="1" type="primary">gatC</name>
    <name type="ordered locus">Saci_1329</name>
</gene>
<sequence>MKIKIDESYLSKLEQLALIRLKNEEKDKISNDLQRIIDFFEKINELELKDVEPLFHPISSGKLRKDEPLKPLNRDEALQNVKRKENGYIVGPRTYGE</sequence>
<proteinExistence type="inferred from homology"/>
<feature type="chain" id="PRO_0000105360" description="Aspartyl/glutamyl-tRNA(Asn/Gln) amidotransferase subunit C">
    <location>
        <begin position="1"/>
        <end position="97"/>
    </location>
</feature>
<dbReference type="EC" id="6.3.5.-" evidence="1"/>
<dbReference type="EMBL" id="CP000077">
    <property type="protein sequence ID" value="AAY80664.1"/>
    <property type="molecule type" value="Genomic_DNA"/>
</dbReference>
<dbReference type="RefSeq" id="WP_011278166.1">
    <property type="nucleotide sequence ID" value="NC_007181.1"/>
</dbReference>
<dbReference type="SMR" id="Q4J966"/>
<dbReference type="STRING" id="330779.Saci_1329"/>
<dbReference type="GeneID" id="14551832"/>
<dbReference type="GeneID" id="78441675"/>
<dbReference type="KEGG" id="sai:Saci_1329"/>
<dbReference type="PATRIC" id="fig|330779.12.peg.1282"/>
<dbReference type="eggNOG" id="arCOG02726">
    <property type="taxonomic scope" value="Archaea"/>
</dbReference>
<dbReference type="HOGENOM" id="CLU_105899_4_1_2"/>
<dbReference type="Proteomes" id="UP000001018">
    <property type="component" value="Chromosome"/>
</dbReference>
<dbReference type="GO" id="GO:0050566">
    <property type="term" value="F:asparaginyl-tRNA synthase (glutamine-hydrolyzing) activity"/>
    <property type="evidence" value="ECO:0007669"/>
    <property type="project" value="RHEA"/>
</dbReference>
<dbReference type="GO" id="GO:0005524">
    <property type="term" value="F:ATP binding"/>
    <property type="evidence" value="ECO:0007669"/>
    <property type="project" value="UniProtKB-KW"/>
</dbReference>
<dbReference type="GO" id="GO:0050567">
    <property type="term" value="F:glutaminyl-tRNA synthase (glutamine-hydrolyzing) activity"/>
    <property type="evidence" value="ECO:0007669"/>
    <property type="project" value="UniProtKB-UniRule"/>
</dbReference>
<dbReference type="GO" id="GO:0070681">
    <property type="term" value="P:glutaminyl-tRNAGln biosynthesis via transamidation"/>
    <property type="evidence" value="ECO:0007669"/>
    <property type="project" value="TreeGrafter"/>
</dbReference>
<dbReference type="GO" id="GO:0006450">
    <property type="term" value="P:regulation of translational fidelity"/>
    <property type="evidence" value="ECO:0007669"/>
    <property type="project" value="InterPro"/>
</dbReference>
<dbReference type="GO" id="GO:0006412">
    <property type="term" value="P:translation"/>
    <property type="evidence" value="ECO:0007669"/>
    <property type="project" value="UniProtKB-UniRule"/>
</dbReference>
<dbReference type="Gene3D" id="1.10.20.60">
    <property type="entry name" value="Glu-tRNAGln amidotransferase C subunit, N-terminal domain"/>
    <property type="match status" value="1"/>
</dbReference>
<dbReference type="HAMAP" id="MF_00122">
    <property type="entry name" value="GatC"/>
    <property type="match status" value="1"/>
</dbReference>
<dbReference type="InterPro" id="IPR036113">
    <property type="entry name" value="Asp/Glu-ADT_sf_sub_c"/>
</dbReference>
<dbReference type="InterPro" id="IPR003837">
    <property type="entry name" value="GatC"/>
</dbReference>
<dbReference type="NCBIfam" id="TIGR00135">
    <property type="entry name" value="gatC"/>
    <property type="match status" value="1"/>
</dbReference>
<dbReference type="NCBIfam" id="NF000684">
    <property type="entry name" value="PRK00034.3-4"/>
    <property type="match status" value="1"/>
</dbReference>
<dbReference type="PANTHER" id="PTHR15004">
    <property type="entry name" value="GLUTAMYL-TRNA(GLN) AMIDOTRANSFERASE SUBUNIT C, MITOCHONDRIAL"/>
    <property type="match status" value="1"/>
</dbReference>
<dbReference type="PANTHER" id="PTHR15004:SF0">
    <property type="entry name" value="GLUTAMYL-TRNA(GLN) AMIDOTRANSFERASE SUBUNIT C, MITOCHONDRIAL"/>
    <property type="match status" value="1"/>
</dbReference>
<dbReference type="Pfam" id="PF02686">
    <property type="entry name" value="GatC"/>
    <property type="match status" value="1"/>
</dbReference>
<dbReference type="SUPFAM" id="SSF141000">
    <property type="entry name" value="Glu-tRNAGln amidotransferase C subunit"/>
    <property type="match status" value="1"/>
</dbReference>
<organism>
    <name type="scientific">Sulfolobus acidocaldarius (strain ATCC 33909 / DSM 639 / JCM 8929 / NBRC 15157 / NCIMB 11770)</name>
    <dbReference type="NCBI Taxonomy" id="330779"/>
    <lineage>
        <taxon>Archaea</taxon>
        <taxon>Thermoproteota</taxon>
        <taxon>Thermoprotei</taxon>
        <taxon>Sulfolobales</taxon>
        <taxon>Sulfolobaceae</taxon>
        <taxon>Sulfolobus</taxon>
    </lineage>
</organism>
<reference key="1">
    <citation type="journal article" date="2005" name="J. Bacteriol.">
        <title>The genome of Sulfolobus acidocaldarius, a model organism of the Crenarchaeota.</title>
        <authorList>
            <person name="Chen L."/>
            <person name="Bruegger K."/>
            <person name="Skovgaard M."/>
            <person name="Redder P."/>
            <person name="She Q."/>
            <person name="Torarinsson E."/>
            <person name="Greve B."/>
            <person name="Awayez M."/>
            <person name="Zibat A."/>
            <person name="Klenk H.-P."/>
            <person name="Garrett R.A."/>
        </authorList>
    </citation>
    <scope>NUCLEOTIDE SEQUENCE [LARGE SCALE GENOMIC DNA]</scope>
    <source>
        <strain>ATCC 33909 / DSM 639 / JCM 8929 / NBRC 15157 / NCIMB 11770</strain>
    </source>
</reference>
<evidence type="ECO:0000255" key="1">
    <source>
        <dbReference type="HAMAP-Rule" id="MF_00122"/>
    </source>
</evidence>
<keyword id="KW-0067">ATP-binding</keyword>
<keyword id="KW-0436">Ligase</keyword>
<keyword id="KW-0547">Nucleotide-binding</keyword>
<keyword id="KW-0648">Protein biosynthesis</keyword>
<keyword id="KW-1185">Reference proteome</keyword>
<protein>
    <recommendedName>
        <fullName evidence="1">Aspartyl/glutamyl-tRNA(Asn/Gln) amidotransferase subunit C</fullName>
        <shortName evidence="1">Asp/Glu-ADT subunit C</shortName>
        <ecNumber evidence="1">6.3.5.-</ecNumber>
    </recommendedName>
</protein>
<accession>Q4J966</accession>
<comment type="function">
    <text evidence="1">Allows the formation of correctly charged Asn-tRNA(Asn) or Gln-tRNA(Gln) through the transamidation of misacylated Asp-tRNA(Asn) or Glu-tRNA(Gln) in organisms which lack either or both of asparaginyl-tRNA or glutaminyl-tRNA synthetases. The reaction takes place in the presence of glutamine and ATP through an activated phospho-Asp-tRNA(Asn) or phospho-Glu-tRNA(Gln).</text>
</comment>
<comment type="catalytic activity">
    <reaction evidence="1">
        <text>L-glutamyl-tRNA(Gln) + L-glutamine + ATP + H2O = L-glutaminyl-tRNA(Gln) + L-glutamate + ADP + phosphate + H(+)</text>
        <dbReference type="Rhea" id="RHEA:17521"/>
        <dbReference type="Rhea" id="RHEA-COMP:9681"/>
        <dbReference type="Rhea" id="RHEA-COMP:9684"/>
        <dbReference type="ChEBI" id="CHEBI:15377"/>
        <dbReference type="ChEBI" id="CHEBI:15378"/>
        <dbReference type="ChEBI" id="CHEBI:29985"/>
        <dbReference type="ChEBI" id="CHEBI:30616"/>
        <dbReference type="ChEBI" id="CHEBI:43474"/>
        <dbReference type="ChEBI" id="CHEBI:58359"/>
        <dbReference type="ChEBI" id="CHEBI:78520"/>
        <dbReference type="ChEBI" id="CHEBI:78521"/>
        <dbReference type="ChEBI" id="CHEBI:456216"/>
    </reaction>
</comment>
<comment type="catalytic activity">
    <reaction evidence="1">
        <text>L-aspartyl-tRNA(Asn) + L-glutamine + ATP + H2O = L-asparaginyl-tRNA(Asn) + L-glutamate + ADP + phosphate + 2 H(+)</text>
        <dbReference type="Rhea" id="RHEA:14513"/>
        <dbReference type="Rhea" id="RHEA-COMP:9674"/>
        <dbReference type="Rhea" id="RHEA-COMP:9677"/>
        <dbReference type="ChEBI" id="CHEBI:15377"/>
        <dbReference type="ChEBI" id="CHEBI:15378"/>
        <dbReference type="ChEBI" id="CHEBI:29985"/>
        <dbReference type="ChEBI" id="CHEBI:30616"/>
        <dbReference type="ChEBI" id="CHEBI:43474"/>
        <dbReference type="ChEBI" id="CHEBI:58359"/>
        <dbReference type="ChEBI" id="CHEBI:78515"/>
        <dbReference type="ChEBI" id="CHEBI:78516"/>
        <dbReference type="ChEBI" id="CHEBI:456216"/>
    </reaction>
</comment>
<comment type="subunit">
    <text evidence="1">Heterotrimer of A, B and C subunits.</text>
</comment>
<comment type="similarity">
    <text evidence="1">Belongs to the GatC family.</text>
</comment>
<name>GATC_SULAC</name>